<dbReference type="EMBL" id="AE000516">
    <property type="protein sequence ID" value="AAK47558.1"/>
    <property type="molecule type" value="Genomic_DNA"/>
</dbReference>
<dbReference type="PIR" id="G70645">
    <property type="entry name" value="G70645"/>
</dbReference>
<dbReference type="RefSeq" id="WP_003416373.1">
    <property type="nucleotide sequence ID" value="NZ_KK341227.1"/>
</dbReference>
<dbReference type="SMR" id="P9WFD2"/>
<dbReference type="KEGG" id="mtc:MT3220"/>
<dbReference type="PATRIC" id="fig|83331.31.peg.3470"/>
<dbReference type="HOGENOM" id="CLU_049301_2_3_11"/>
<dbReference type="Proteomes" id="UP000001020">
    <property type="component" value="Chromosome"/>
</dbReference>
<dbReference type="GO" id="GO:0005524">
    <property type="term" value="F:ATP binding"/>
    <property type="evidence" value="ECO:0007669"/>
    <property type="project" value="UniProtKB-KW"/>
</dbReference>
<dbReference type="Gene3D" id="3.40.50.620">
    <property type="entry name" value="HUPs"/>
    <property type="match status" value="2"/>
</dbReference>
<dbReference type="InterPro" id="IPR014729">
    <property type="entry name" value="Rossmann-like_a/b/a_fold"/>
</dbReference>
<dbReference type="InterPro" id="IPR006015">
    <property type="entry name" value="Universal_stress_UspA"/>
</dbReference>
<dbReference type="InterPro" id="IPR006016">
    <property type="entry name" value="UspA"/>
</dbReference>
<dbReference type="PANTHER" id="PTHR46268">
    <property type="entry name" value="STRESS RESPONSE PROTEIN NHAX"/>
    <property type="match status" value="1"/>
</dbReference>
<dbReference type="PANTHER" id="PTHR46268:SF6">
    <property type="entry name" value="UNIVERSAL STRESS PROTEIN UP12"/>
    <property type="match status" value="1"/>
</dbReference>
<dbReference type="Pfam" id="PF00582">
    <property type="entry name" value="Usp"/>
    <property type="match status" value="1"/>
</dbReference>
<dbReference type="PRINTS" id="PR01438">
    <property type="entry name" value="UNVRSLSTRESS"/>
</dbReference>
<dbReference type="SUPFAM" id="SSF52402">
    <property type="entry name" value="Adenine nucleotide alpha hydrolases-like"/>
    <property type="match status" value="1"/>
</dbReference>
<protein>
    <recommendedName>
        <fullName>Universal stress protein MT3220</fullName>
    </recommendedName>
</protein>
<feature type="chain" id="PRO_0000428559" description="Universal stress protein MT3220">
    <location>
        <begin position="1"/>
        <end position="268"/>
    </location>
</feature>
<feature type="binding site" evidence="1">
    <location>
        <position position="13"/>
    </location>
    <ligand>
        <name>ATP</name>
        <dbReference type="ChEBI" id="CHEBI:30616"/>
    </ligand>
</feature>
<feature type="binding site" evidence="1">
    <location>
        <begin position="107"/>
        <end position="113"/>
    </location>
    <ligand>
        <name>ATP</name>
        <dbReference type="ChEBI" id="CHEBI:30616"/>
    </ligand>
</feature>
<feature type="binding site" evidence="1">
    <location>
        <position position="117"/>
    </location>
    <ligand>
        <name>ATP</name>
        <dbReference type="ChEBI" id="CHEBI:30616"/>
    </ligand>
</feature>
<feature type="binding site" evidence="1">
    <location>
        <begin position="120"/>
        <end position="121"/>
    </location>
    <ligand>
        <name>ATP</name>
        <dbReference type="ChEBI" id="CHEBI:30616"/>
    </ligand>
</feature>
<keyword id="KW-0067">ATP-binding</keyword>
<keyword id="KW-0547">Nucleotide-binding</keyword>
<keyword id="KW-1185">Reference proteome</keyword>
<organism>
    <name type="scientific">Mycobacterium tuberculosis (strain CDC 1551 / Oshkosh)</name>
    <dbReference type="NCBI Taxonomy" id="83331"/>
    <lineage>
        <taxon>Bacteria</taxon>
        <taxon>Bacillati</taxon>
        <taxon>Actinomycetota</taxon>
        <taxon>Actinomycetes</taxon>
        <taxon>Mycobacteriales</taxon>
        <taxon>Mycobacteriaceae</taxon>
        <taxon>Mycobacterium</taxon>
        <taxon>Mycobacterium tuberculosis complex</taxon>
    </lineage>
</organism>
<comment type="induction">
    <text evidence="2">A member of the dormancy regulon. Induced in response to reduced oxygen tension (hypoxia) and low levels of nitric oxide (NO).</text>
</comment>
<comment type="disruption phenotype">
    <text evidence="2">A strain lacking this gene does not induce most genes of the dormancy regulon, due to polar effects on the downstream devR (dosR) gene. Restoration of induction only occurs when both this gene and devR (dosR) are transformed into the deleted strain.</text>
</comment>
<comment type="similarity">
    <text evidence="3">Belongs to the universal stress protein A family.</text>
</comment>
<sequence>MSDPRPARAVVVGIDGSRAATHAALWAVDEAVNRDIPLRLVYVIDPSQLSAAGEGGGQSAARAALHDASRKVEATGQPVKIETEVLCGRPLTKLMQESRSAAMLCVGSVGLDHVRGRRGSVAATLAGSALCPVAVIHPSPAEPATTSQVSAVVAEVDNGVVLRHAFEEARLRGVPLRAVAVHAAETPDDVEQGSRLAHVHLSRRLAHWTRLYPEVRVDRAIAGGSACRHLAANAKPGQLFVADSHSAHELCGAYQPGCAVLTVRSANL</sequence>
<reference key="1">
    <citation type="journal article" date="2002" name="J. Bacteriol.">
        <title>Whole-genome comparison of Mycobacterium tuberculosis clinical and laboratory strains.</title>
        <authorList>
            <person name="Fleischmann R.D."/>
            <person name="Alland D."/>
            <person name="Eisen J.A."/>
            <person name="Carpenter L."/>
            <person name="White O."/>
            <person name="Peterson J.D."/>
            <person name="DeBoy R.T."/>
            <person name="Dodson R.J."/>
            <person name="Gwinn M.L."/>
            <person name="Haft D.H."/>
            <person name="Hickey E.K."/>
            <person name="Kolonay J.F."/>
            <person name="Nelson W.C."/>
            <person name="Umayam L.A."/>
            <person name="Ermolaeva M.D."/>
            <person name="Salzberg S.L."/>
            <person name="Delcher A."/>
            <person name="Utterback T.R."/>
            <person name="Weidman J.F."/>
            <person name="Khouri H.M."/>
            <person name="Gill J."/>
            <person name="Mikula A."/>
            <person name="Bishai W."/>
            <person name="Jacobs W.R. Jr."/>
            <person name="Venter J.C."/>
            <person name="Fraser C.M."/>
        </authorList>
    </citation>
    <scope>NUCLEOTIDE SEQUENCE [LARGE SCALE GENOMIC DNA]</scope>
    <source>
        <strain>CDC 1551 / Oshkosh</strain>
    </source>
</reference>
<reference key="2">
    <citation type="journal article" date="2003" name="J. Exp. Med.">
        <title>Inhibition of respiration by nitric oxide induces a Mycobacterium tuberculosis dormancy program.</title>
        <authorList>
            <person name="Voskuil M.I."/>
            <person name="Schnappinger D."/>
            <person name="Visconti K.C."/>
            <person name="Harrell M.I."/>
            <person name="Dolganov G.M."/>
            <person name="Sherman D.R."/>
            <person name="Schoolnik G.K."/>
        </authorList>
    </citation>
    <scope>INDUCTION BY NITRIC OXIDE (NO) AND BY HYPOXIA</scope>
    <scope>DORMANCY REGULON</scope>
    <scope>DISRUPTION PHENOTYPE</scope>
    <source>
        <strain>CDC 1551 / Oshkosh</strain>
    </source>
</reference>
<gene>
    <name type="ordered locus">MT3220</name>
</gene>
<name>Y3134_MYCTO</name>
<evidence type="ECO:0000250" key="1">
    <source>
        <dbReference type="UniProtKB" id="P9WFD7"/>
    </source>
</evidence>
<evidence type="ECO:0000269" key="2">
    <source>
    </source>
</evidence>
<evidence type="ECO:0000305" key="3"/>
<proteinExistence type="evidence at transcript level"/>
<accession>P9WFD2</accession>
<accession>L0TEM6</accession>
<accession>P95192</accession>
<accession>Q7D624</accession>